<proteinExistence type="inferred from homology"/>
<accession>P0AD73</accession>
<accession>P03057</accession>
<evidence type="ECO:0000250" key="1"/>
<organism>
    <name type="scientific">Shigella flexneri</name>
    <dbReference type="NCBI Taxonomy" id="623"/>
    <lineage>
        <taxon>Bacteria</taxon>
        <taxon>Pseudomonadati</taxon>
        <taxon>Pseudomonadota</taxon>
        <taxon>Gammaproteobacteria</taxon>
        <taxon>Enterobacterales</taxon>
        <taxon>Enterobacteriaceae</taxon>
        <taxon>Shigella</taxon>
    </lineage>
</organism>
<name>LPF_SHIFL</name>
<dbReference type="EMBL" id="AE005674">
    <property type="protein sequence ID" value="AAN44154.1"/>
    <property type="molecule type" value="Genomic_DNA"/>
</dbReference>
<dbReference type="EMBL" id="AE014073">
    <property type="protein sequence ID" value="AAP17979.1"/>
    <property type="molecule type" value="Genomic_DNA"/>
</dbReference>
<dbReference type="RefSeq" id="WP_010723158.1">
    <property type="nucleotide sequence ID" value="NZ_WPGW01000074.1"/>
</dbReference>
<dbReference type="KEGG" id="sfx:S4807"/>
<dbReference type="HOGENOM" id="CLU_222397_0_0_6"/>
<dbReference type="Proteomes" id="UP000001006">
    <property type="component" value="Chromosome"/>
</dbReference>
<dbReference type="Proteomes" id="UP000002673">
    <property type="component" value="Chromosome"/>
</dbReference>
<dbReference type="InterPro" id="IPR049907">
    <property type="entry name" value="PheL"/>
</dbReference>
<dbReference type="NCBIfam" id="NF038149">
    <property type="entry name" value="leader_PheL"/>
    <property type="match status" value="1"/>
</dbReference>
<protein>
    <recommendedName>
        <fullName>phe operon leader peptide</fullName>
    </recommendedName>
    <alternativeName>
        <fullName>phe operon attenuator peptide</fullName>
    </alternativeName>
</protein>
<feature type="peptide" id="PRO_0000043980" description="phe operon leader peptide">
    <location>
        <begin position="1"/>
        <end position="15"/>
    </location>
</feature>
<keyword id="KW-0428">Leader peptide</keyword>
<keyword id="KW-1185">Reference proteome</keyword>
<comment type="function">
    <text evidence="1">This protein is involved in control of the biosynthesis of phenylalanine.</text>
</comment>
<reference key="1">
    <citation type="journal article" date="2002" name="Nucleic Acids Res.">
        <title>Genome sequence of Shigella flexneri 2a: insights into pathogenicity through comparison with genomes of Escherichia coli K12 and O157.</title>
        <authorList>
            <person name="Jin Q."/>
            <person name="Yuan Z."/>
            <person name="Xu J."/>
            <person name="Wang Y."/>
            <person name="Shen Y."/>
            <person name="Lu W."/>
            <person name="Wang J."/>
            <person name="Liu H."/>
            <person name="Yang J."/>
            <person name="Yang F."/>
            <person name="Zhang X."/>
            <person name="Zhang J."/>
            <person name="Yang G."/>
            <person name="Wu H."/>
            <person name="Qu D."/>
            <person name="Dong J."/>
            <person name="Sun L."/>
            <person name="Xue Y."/>
            <person name="Zhao A."/>
            <person name="Gao Y."/>
            <person name="Zhu J."/>
            <person name="Kan B."/>
            <person name="Ding K."/>
            <person name="Chen S."/>
            <person name="Cheng H."/>
            <person name="Yao Z."/>
            <person name="He B."/>
            <person name="Chen R."/>
            <person name="Ma D."/>
            <person name="Qiang B."/>
            <person name="Wen Y."/>
            <person name="Hou Y."/>
            <person name="Yu J."/>
        </authorList>
    </citation>
    <scope>NUCLEOTIDE SEQUENCE [LARGE SCALE GENOMIC DNA]</scope>
    <source>
        <strain>301 / Serotype 2a</strain>
    </source>
</reference>
<reference key="2">
    <citation type="journal article" date="2003" name="Infect. Immun.">
        <title>Complete genome sequence and comparative genomics of Shigella flexneri serotype 2a strain 2457T.</title>
        <authorList>
            <person name="Wei J."/>
            <person name="Goldberg M.B."/>
            <person name="Burland V."/>
            <person name="Venkatesan M.M."/>
            <person name="Deng W."/>
            <person name="Fournier G."/>
            <person name="Mayhew G.F."/>
            <person name="Plunkett G. III"/>
            <person name="Rose D.J."/>
            <person name="Darling A."/>
            <person name="Mau B."/>
            <person name="Perna N.T."/>
            <person name="Payne S.M."/>
            <person name="Runyen-Janecky L.J."/>
            <person name="Zhou S."/>
            <person name="Schwartz D.C."/>
            <person name="Blattner F.R."/>
        </authorList>
    </citation>
    <scope>NUCLEOTIDE SEQUENCE [LARGE SCALE GENOMIC DNA]</scope>
    <source>
        <strain>ATCC 700930 / 2457T / Serotype 2a</strain>
    </source>
</reference>
<sequence length="15" mass="1924">MKHIPFFFAFFFTFP</sequence>
<gene>
    <name type="primary">pheL</name>
    <name type="ordered locus">SF2658</name>
    <name type="ordered locus">S4807</name>
</gene>